<organism>
    <name type="scientific">Aspergillus fumigatus (strain ATCC MYA-4609 / CBS 101355 / FGSC A1100 / Af293)</name>
    <name type="common">Neosartorya fumigata</name>
    <dbReference type="NCBI Taxonomy" id="330879"/>
    <lineage>
        <taxon>Eukaryota</taxon>
        <taxon>Fungi</taxon>
        <taxon>Dikarya</taxon>
        <taxon>Ascomycota</taxon>
        <taxon>Pezizomycotina</taxon>
        <taxon>Eurotiomycetes</taxon>
        <taxon>Eurotiomycetidae</taxon>
        <taxon>Eurotiales</taxon>
        <taxon>Aspergillaceae</taxon>
        <taxon>Aspergillus</taxon>
        <taxon>Aspergillus subgen. Fumigati</taxon>
    </lineage>
</organism>
<name>PLB2_ASPFU</name>
<keyword id="KW-0325">Glycoprotein</keyword>
<keyword id="KW-0378">Hydrolase</keyword>
<keyword id="KW-0442">Lipid degradation</keyword>
<keyword id="KW-0443">Lipid metabolism</keyword>
<keyword id="KW-1185">Reference proteome</keyword>
<accession>Q9P8P4</accession>
<accession>Q4WE07</accession>
<comment type="function">
    <text>Catalyzes the release of fatty acids from lysophospholipids.</text>
</comment>
<comment type="catalytic activity">
    <reaction>
        <text>a 1-acyl-sn-glycero-3-phosphocholine + H2O = sn-glycerol 3-phosphocholine + a fatty acid + H(+)</text>
        <dbReference type="Rhea" id="RHEA:15177"/>
        <dbReference type="ChEBI" id="CHEBI:15377"/>
        <dbReference type="ChEBI" id="CHEBI:15378"/>
        <dbReference type="ChEBI" id="CHEBI:16870"/>
        <dbReference type="ChEBI" id="CHEBI:28868"/>
        <dbReference type="ChEBI" id="CHEBI:58168"/>
        <dbReference type="EC" id="3.1.1.5"/>
    </reaction>
</comment>
<comment type="similarity">
    <text evidence="5">Belongs to the lysophospholipase family.</text>
</comment>
<gene>
    <name type="primary">plb2</name>
    <name type="ORF">AFUA_5G01340</name>
</gene>
<feature type="chain" id="PRO_0000245557" description="Lysophospholipase 2">
    <location>
        <begin position="1"/>
        <end position="588"/>
    </location>
</feature>
<feature type="domain" description="PLA2c" evidence="2">
    <location>
        <begin position="31"/>
        <end position="574"/>
    </location>
</feature>
<feature type="region of interest" description="Disordered" evidence="3">
    <location>
        <begin position="15"/>
        <end position="38"/>
    </location>
</feature>
<feature type="glycosylation site" description="N-linked (GlcNAc...) asparagine" evidence="1">
    <location>
        <position position="41"/>
    </location>
</feature>
<feature type="glycosylation site" description="N-linked (GlcNAc...) asparagine" evidence="1">
    <location>
        <position position="58"/>
    </location>
</feature>
<feature type="glycosylation site" description="N-linked (GlcNAc...) asparagine" evidence="1">
    <location>
        <position position="77"/>
    </location>
</feature>
<feature type="glycosylation site" description="N-linked (GlcNAc...) asparagine" evidence="1">
    <location>
        <position position="84"/>
    </location>
</feature>
<feature type="glycosylation site" description="N-linked (GlcNAc...) asparagine" evidence="1">
    <location>
        <position position="88"/>
    </location>
</feature>
<feature type="glycosylation site" description="N-linked (GlcNAc...) asparagine" evidence="1">
    <location>
        <position position="119"/>
    </location>
</feature>
<feature type="glycosylation site" description="N-linked (GlcNAc...) asparagine" evidence="1">
    <location>
        <position position="123"/>
    </location>
</feature>
<feature type="glycosylation site" description="N-linked (GlcNAc...) asparagine" evidence="1">
    <location>
        <position position="157"/>
    </location>
</feature>
<feature type="glycosylation site" description="N-linked (GlcNAc...) asparagine" evidence="1">
    <location>
        <position position="167"/>
    </location>
</feature>
<feature type="glycosylation site" description="N-linked (GlcNAc...) asparagine" evidence="1">
    <location>
        <position position="228"/>
    </location>
</feature>
<feature type="glycosylation site" description="N-linked (GlcNAc...) asparagine" evidence="1">
    <location>
        <position position="272"/>
    </location>
</feature>
<feature type="glycosylation site" description="N-linked (GlcNAc...) asparagine" evidence="1">
    <location>
        <position position="302"/>
    </location>
</feature>
<feature type="glycosylation site" description="N-linked (GlcNAc...) asparagine" evidence="1">
    <location>
        <position position="340"/>
    </location>
</feature>
<feature type="glycosylation site" description="N-linked (GlcNAc...) asparagine" evidence="1">
    <location>
        <position position="431"/>
    </location>
</feature>
<feature type="glycosylation site" description="N-linked (GlcNAc...) asparagine" evidence="1">
    <location>
        <position position="449"/>
    </location>
</feature>
<feature type="glycosylation site" description="N-linked (GlcNAc...) asparagine" evidence="1">
    <location>
        <position position="478"/>
    </location>
</feature>
<feature type="glycosylation site" description="N-linked (GlcNAc...) asparagine" evidence="1">
    <location>
        <position position="481"/>
    </location>
</feature>
<feature type="glycosylation site" description="N-linked (GlcNAc...) asparagine" evidence="1">
    <location>
        <position position="501"/>
    </location>
</feature>
<feature type="glycosylation site" description="N-linked (GlcNAc...) asparagine" evidence="1">
    <location>
        <position position="510"/>
    </location>
</feature>
<feature type="glycosylation site" description="N-linked (GlcNAc...) asparagine" evidence="1">
    <location>
        <position position="529"/>
    </location>
</feature>
<feature type="glycosylation site" description="N-linked (GlcNAc...) asparagine" evidence="1">
    <location>
        <position position="553"/>
    </location>
</feature>
<feature type="glycosylation site" description="N-linked (GlcNAc...) asparagine" evidence="1">
    <location>
        <position position="570"/>
    </location>
</feature>
<feature type="glycosylation site" description="N-linked (GlcNAc...) asparagine" evidence="1">
    <location>
        <position position="574"/>
    </location>
</feature>
<feature type="sequence variant" description="In strain: ATCC 90240 / AF-10." evidence="4">
    <original>L</original>
    <variation>N</variation>
    <location>
        <position position="398"/>
    </location>
</feature>
<feature type="sequence variant" description="In strain: ATCC 90240 / AF-10." evidence="4">
    <original>I</original>
    <variation>V</variation>
    <location>
        <position position="573"/>
    </location>
</feature>
<sequence>MYKNRVELTTTAPVNRALPNAPDGYTPQGETCPSKRPSIRNATALSSAETSWLKARRNNTKDALKAFLSRVDLGSFNGSDYIANHSANASALPNIGIAVSGGGYRALMNGGGALQAFDNRTTNSTHSGQLGGILQSATYLSGLSGGSWLVGSIYMNNFSDVSSLQDNGSVWQFQDSIFSGPTQSTTWDIGTVEYYSQLLGAVDGKSNAGYEVSITDYWGRSLSYQLINASEGGVGYTWSSIALSKDFQAGTMPMPLVIADGRAPGEILVPANTTVFEFNPWEFGSWDKSLSAFVSLEFLGSNFSKGTLATGEKCVRGFDNAGFIMGTSSSLFNQAFLQMNNTDAPSVVKDAISAILGKIGSENNDIAVYKPNPFYRYASQSKYTSSPSLTLVDGGEDLQNIPLDPLLQPQRHVDVILAVDSSADTTTRWPNGTSLVATYERNVDSSQRNSSLPFPSVPDQNTFVNLGLNNRPTFFGCNSSNATGAPLVVYIPNAPYIYPSNVSTFDLQYNTSERNAIIENGYDVATLGNGTVDSNWPACLACAILSRSFERTNTTVPKTCSTCFKTYCWNGTINATTPGDYYPTLKLH</sequence>
<dbReference type="EC" id="3.1.1.5"/>
<dbReference type="EMBL" id="AAHF01000011">
    <property type="protein sequence ID" value="EAL86170.1"/>
    <property type="molecule type" value="Genomic_DNA"/>
</dbReference>
<dbReference type="EMBL" id="AF223005">
    <property type="protein sequence ID" value="AAF64039.1"/>
    <property type="molecule type" value="Genomic_DNA"/>
</dbReference>
<dbReference type="RefSeq" id="XP_748208.1">
    <property type="nucleotide sequence ID" value="XM_743115.1"/>
</dbReference>
<dbReference type="SMR" id="Q9P8P4"/>
<dbReference type="FunCoup" id="Q9P8P4">
    <property type="interactions" value="79"/>
</dbReference>
<dbReference type="STRING" id="330879.Q9P8P4"/>
<dbReference type="GlyCosmos" id="Q9P8P4">
    <property type="glycosylation" value="23 sites, No reported glycans"/>
</dbReference>
<dbReference type="EnsemblFungi" id="EAL86170">
    <property type="protein sequence ID" value="EAL86170"/>
    <property type="gene ID" value="AFUA_5G01340"/>
</dbReference>
<dbReference type="GeneID" id="3505495"/>
<dbReference type="KEGG" id="afm:AFUA_5G01340"/>
<dbReference type="VEuPathDB" id="FungiDB:Afu5g01340"/>
<dbReference type="eggNOG" id="KOG1325">
    <property type="taxonomic scope" value="Eukaryota"/>
</dbReference>
<dbReference type="HOGENOM" id="CLU_014602_0_0_1"/>
<dbReference type="InParanoid" id="Q9P8P4"/>
<dbReference type="OMA" id="FARYCWN"/>
<dbReference type="OrthoDB" id="9986881at2759"/>
<dbReference type="BRENDA" id="3.1.1.5">
    <property type="organism ID" value="508"/>
</dbReference>
<dbReference type="Proteomes" id="UP000002530">
    <property type="component" value="Chromosome 5"/>
</dbReference>
<dbReference type="GO" id="GO:0005829">
    <property type="term" value="C:cytosol"/>
    <property type="evidence" value="ECO:0000318"/>
    <property type="project" value="GO_Central"/>
</dbReference>
<dbReference type="GO" id="GO:0005783">
    <property type="term" value="C:endoplasmic reticulum"/>
    <property type="evidence" value="ECO:0000318"/>
    <property type="project" value="GO_Central"/>
</dbReference>
<dbReference type="GO" id="GO:0004622">
    <property type="term" value="F:lysophospholipase activity"/>
    <property type="evidence" value="ECO:0007669"/>
    <property type="project" value="UniProtKB-EC"/>
</dbReference>
<dbReference type="GO" id="GO:0004623">
    <property type="term" value="F:phospholipase A2 activity"/>
    <property type="evidence" value="ECO:0000318"/>
    <property type="project" value="GO_Central"/>
</dbReference>
<dbReference type="GO" id="GO:0046475">
    <property type="term" value="P:glycerophospholipid catabolic process"/>
    <property type="evidence" value="ECO:0000318"/>
    <property type="project" value="GO_Central"/>
</dbReference>
<dbReference type="FunFam" id="3.40.1090.10:FF:000010">
    <property type="entry name" value="Lysophospholipase"/>
    <property type="match status" value="1"/>
</dbReference>
<dbReference type="Gene3D" id="3.40.1090.10">
    <property type="entry name" value="Cytosolic phospholipase A2 catalytic domain"/>
    <property type="match status" value="1"/>
</dbReference>
<dbReference type="InterPro" id="IPR016035">
    <property type="entry name" value="Acyl_Trfase/lysoPLipase"/>
</dbReference>
<dbReference type="InterPro" id="IPR002642">
    <property type="entry name" value="LysoPLipase_cat_dom"/>
</dbReference>
<dbReference type="PANTHER" id="PTHR10728">
    <property type="entry name" value="CYTOSOLIC PHOSPHOLIPASE A2"/>
    <property type="match status" value="1"/>
</dbReference>
<dbReference type="PANTHER" id="PTHR10728:SF62">
    <property type="entry name" value="LYSOPHOSPHOLIPASE"/>
    <property type="match status" value="1"/>
</dbReference>
<dbReference type="Pfam" id="PF01735">
    <property type="entry name" value="PLA2_B"/>
    <property type="match status" value="1"/>
</dbReference>
<dbReference type="SMART" id="SM00022">
    <property type="entry name" value="PLAc"/>
    <property type="match status" value="1"/>
</dbReference>
<dbReference type="SUPFAM" id="SSF52151">
    <property type="entry name" value="FabD/lysophospholipase-like"/>
    <property type="match status" value="1"/>
</dbReference>
<dbReference type="PROSITE" id="PS51210">
    <property type="entry name" value="PLA2C"/>
    <property type="match status" value="1"/>
</dbReference>
<proteinExistence type="inferred from homology"/>
<protein>
    <recommendedName>
        <fullName>Lysophospholipase 2</fullName>
        <ecNumber>3.1.1.5</ecNumber>
    </recommendedName>
    <alternativeName>
        <fullName>Phospholipase B 2</fullName>
    </alternativeName>
</protein>
<reference key="1">
    <citation type="journal article" date="2005" name="Nature">
        <title>Genomic sequence of the pathogenic and allergenic filamentous fungus Aspergillus fumigatus.</title>
        <authorList>
            <person name="Nierman W.C."/>
            <person name="Pain A."/>
            <person name="Anderson M.J."/>
            <person name="Wortman J.R."/>
            <person name="Kim H.S."/>
            <person name="Arroyo J."/>
            <person name="Berriman M."/>
            <person name="Abe K."/>
            <person name="Archer D.B."/>
            <person name="Bermejo C."/>
            <person name="Bennett J.W."/>
            <person name="Bowyer P."/>
            <person name="Chen D."/>
            <person name="Collins M."/>
            <person name="Coulsen R."/>
            <person name="Davies R."/>
            <person name="Dyer P.S."/>
            <person name="Farman M.L."/>
            <person name="Fedorova N."/>
            <person name="Fedorova N.D."/>
            <person name="Feldblyum T.V."/>
            <person name="Fischer R."/>
            <person name="Fosker N."/>
            <person name="Fraser A."/>
            <person name="Garcia J.L."/>
            <person name="Garcia M.J."/>
            <person name="Goble A."/>
            <person name="Goldman G.H."/>
            <person name="Gomi K."/>
            <person name="Griffith-Jones S."/>
            <person name="Gwilliam R."/>
            <person name="Haas B.J."/>
            <person name="Haas H."/>
            <person name="Harris D.E."/>
            <person name="Horiuchi H."/>
            <person name="Huang J."/>
            <person name="Humphray S."/>
            <person name="Jimenez J."/>
            <person name="Keller N."/>
            <person name="Khouri H."/>
            <person name="Kitamoto K."/>
            <person name="Kobayashi T."/>
            <person name="Konzack S."/>
            <person name="Kulkarni R."/>
            <person name="Kumagai T."/>
            <person name="Lafton A."/>
            <person name="Latge J.-P."/>
            <person name="Li W."/>
            <person name="Lord A."/>
            <person name="Lu C."/>
            <person name="Majoros W.H."/>
            <person name="May G.S."/>
            <person name="Miller B.L."/>
            <person name="Mohamoud Y."/>
            <person name="Molina M."/>
            <person name="Monod M."/>
            <person name="Mouyna I."/>
            <person name="Mulligan S."/>
            <person name="Murphy L.D."/>
            <person name="O'Neil S."/>
            <person name="Paulsen I."/>
            <person name="Penalva M.A."/>
            <person name="Pertea M."/>
            <person name="Price C."/>
            <person name="Pritchard B.L."/>
            <person name="Quail M.A."/>
            <person name="Rabbinowitsch E."/>
            <person name="Rawlins N."/>
            <person name="Rajandream M.A."/>
            <person name="Reichard U."/>
            <person name="Renauld H."/>
            <person name="Robson G.D."/>
            <person name="Rodriguez de Cordoba S."/>
            <person name="Rodriguez-Pena J.M."/>
            <person name="Ronning C.M."/>
            <person name="Rutter S."/>
            <person name="Salzberg S.L."/>
            <person name="Sanchez M."/>
            <person name="Sanchez-Ferrero J.C."/>
            <person name="Saunders D."/>
            <person name="Seeger K."/>
            <person name="Squares R."/>
            <person name="Squares S."/>
            <person name="Takeuchi M."/>
            <person name="Tekaia F."/>
            <person name="Turner G."/>
            <person name="Vazquez de Aldana C.R."/>
            <person name="Weidman J."/>
            <person name="White O."/>
            <person name="Woodward J.R."/>
            <person name="Yu J.-H."/>
            <person name="Fraser C.M."/>
            <person name="Galagan J.E."/>
            <person name="Asai K."/>
            <person name="Machida M."/>
            <person name="Hall N."/>
            <person name="Barrell B.G."/>
            <person name="Denning D.W."/>
        </authorList>
    </citation>
    <scope>NUCLEOTIDE SEQUENCE [LARGE SCALE GENOMIC DNA]</scope>
    <source>
        <strain>ATCC MYA-4609 / CBS 101355 / FGSC A1100 / Af293</strain>
    </source>
</reference>
<reference key="2">
    <citation type="journal article" date="2004" name="FEMS Microbiol. Lett.">
        <title>Characterisation and expression of phospholipases B from the opportunistic fungus Aspergillus fumigatus.</title>
        <authorList>
            <person name="Shen D.-K."/>
            <person name="Noodeh A.D."/>
            <person name="Kazemi A."/>
            <person name="Grillot R."/>
            <person name="Robson G.D."/>
            <person name="Brugere J.-F."/>
        </authorList>
    </citation>
    <scope>NUCLEOTIDE SEQUENCE [GENOMIC DNA] OF 393-573</scope>
    <scope>VARIANTS ASN-398 AND VAL-573</scope>
    <source>
        <strain>ATCC 90240 / AF-10</strain>
    </source>
</reference>
<evidence type="ECO:0000255" key="1"/>
<evidence type="ECO:0000255" key="2">
    <source>
        <dbReference type="PROSITE-ProRule" id="PRU00555"/>
    </source>
</evidence>
<evidence type="ECO:0000256" key="3">
    <source>
        <dbReference type="SAM" id="MobiDB-lite"/>
    </source>
</evidence>
<evidence type="ECO:0000269" key="4">
    <source>
    </source>
</evidence>
<evidence type="ECO:0000305" key="5"/>